<gene>
    <name type="primary">mcp4</name>
    <name type="synonym">mug101</name>
    <name type="ORF">SPBC16E9.08</name>
</gene>
<organism>
    <name type="scientific">Schizosaccharomyces pombe (strain 972 / ATCC 24843)</name>
    <name type="common">Fission yeast</name>
    <dbReference type="NCBI Taxonomy" id="284812"/>
    <lineage>
        <taxon>Eukaryota</taxon>
        <taxon>Fungi</taxon>
        <taxon>Dikarya</taxon>
        <taxon>Ascomycota</taxon>
        <taxon>Taphrinomycotina</taxon>
        <taxon>Schizosaccharomycetes</taxon>
        <taxon>Schizosaccharomycetales</taxon>
        <taxon>Schizosaccharomycetaceae</taxon>
        <taxon>Schizosaccharomyces</taxon>
    </lineage>
</organism>
<evidence type="ECO:0000255" key="1"/>
<evidence type="ECO:0000269" key="2">
    <source>
    </source>
</evidence>
<evidence type="ECO:0000269" key="3">
    <source>
    </source>
</evidence>
<reference key="1">
    <citation type="journal article" date="2007" name="Cell Div.">
        <title>Meiosis specific coiled-coil proteins in Shizosaccharomyces pombe.</title>
        <authorList>
            <person name="Ohtaka A."/>
            <person name="Saito T.T."/>
            <person name="Okuzaki D."/>
            <person name="Nojima H."/>
        </authorList>
    </citation>
    <scope>NUCLEOTIDE SEQUENCE [GENOMIC DNA]</scope>
</reference>
<reference key="2">
    <citation type="journal article" date="2002" name="Nature">
        <title>The genome sequence of Schizosaccharomyces pombe.</title>
        <authorList>
            <person name="Wood V."/>
            <person name="Gwilliam R."/>
            <person name="Rajandream M.A."/>
            <person name="Lyne M.H."/>
            <person name="Lyne R."/>
            <person name="Stewart A."/>
            <person name="Sgouros J.G."/>
            <person name="Peat N."/>
            <person name="Hayles J."/>
            <person name="Baker S.G."/>
            <person name="Basham D."/>
            <person name="Bowman S."/>
            <person name="Brooks K."/>
            <person name="Brown D."/>
            <person name="Brown S."/>
            <person name="Chillingworth T."/>
            <person name="Churcher C.M."/>
            <person name="Collins M."/>
            <person name="Connor R."/>
            <person name="Cronin A."/>
            <person name="Davis P."/>
            <person name="Feltwell T."/>
            <person name="Fraser A."/>
            <person name="Gentles S."/>
            <person name="Goble A."/>
            <person name="Hamlin N."/>
            <person name="Harris D.E."/>
            <person name="Hidalgo J."/>
            <person name="Hodgson G."/>
            <person name="Holroyd S."/>
            <person name="Hornsby T."/>
            <person name="Howarth S."/>
            <person name="Huckle E.J."/>
            <person name="Hunt S."/>
            <person name="Jagels K."/>
            <person name="James K.D."/>
            <person name="Jones L."/>
            <person name="Jones M."/>
            <person name="Leather S."/>
            <person name="McDonald S."/>
            <person name="McLean J."/>
            <person name="Mooney P."/>
            <person name="Moule S."/>
            <person name="Mungall K.L."/>
            <person name="Murphy L.D."/>
            <person name="Niblett D."/>
            <person name="Odell C."/>
            <person name="Oliver K."/>
            <person name="O'Neil S."/>
            <person name="Pearson D."/>
            <person name="Quail M.A."/>
            <person name="Rabbinowitsch E."/>
            <person name="Rutherford K.M."/>
            <person name="Rutter S."/>
            <person name="Saunders D."/>
            <person name="Seeger K."/>
            <person name="Sharp S."/>
            <person name="Skelton J."/>
            <person name="Simmonds M.N."/>
            <person name="Squares R."/>
            <person name="Squares S."/>
            <person name="Stevens K."/>
            <person name="Taylor K."/>
            <person name="Taylor R.G."/>
            <person name="Tivey A."/>
            <person name="Walsh S.V."/>
            <person name="Warren T."/>
            <person name="Whitehead S."/>
            <person name="Woodward J.R."/>
            <person name="Volckaert G."/>
            <person name="Aert R."/>
            <person name="Robben J."/>
            <person name="Grymonprez B."/>
            <person name="Weltjens I."/>
            <person name="Vanstreels E."/>
            <person name="Rieger M."/>
            <person name="Schaefer M."/>
            <person name="Mueller-Auer S."/>
            <person name="Gabel C."/>
            <person name="Fuchs M."/>
            <person name="Duesterhoeft A."/>
            <person name="Fritzc C."/>
            <person name="Holzer E."/>
            <person name="Moestl D."/>
            <person name="Hilbert H."/>
            <person name="Borzym K."/>
            <person name="Langer I."/>
            <person name="Beck A."/>
            <person name="Lehrach H."/>
            <person name="Reinhardt R."/>
            <person name="Pohl T.M."/>
            <person name="Eger P."/>
            <person name="Zimmermann W."/>
            <person name="Wedler H."/>
            <person name="Wambutt R."/>
            <person name="Purnelle B."/>
            <person name="Goffeau A."/>
            <person name="Cadieu E."/>
            <person name="Dreano S."/>
            <person name="Gloux S."/>
            <person name="Lelaure V."/>
            <person name="Mottier S."/>
            <person name="Galibert F."/>
            <person name="Aves S.J."/>
            <person name="Xiang Z."/>
            <person name="Hunt C."/>
            <person name="Moore K."/>
            <person name="Hurst S.M."/>
            <person name="Lucas M."/>
            <person name="Rochet M."/>
            <person name="Gaillardin C."/>
            <person name="Tallada V.A."/>
            <person name="Garzon A."/>
            <person name="Thode G."/>
            <person name="Daga R.R."/>
            <person name="Cruzado L."/>
            <person name="Jimenez J."/>
            <person name="Sanchez M."/>
            <person name="del Rey F."/>
            <person name="Benito J."/>
            <person name="Dominguez A."/>
            <person name="Revuelta J.L."/>
            <person name="Moreno S."/>
            <person name="Armstrong J."/>
            <person name="Forsburg S.L."/>
            <person name="Cerutti L."/>
            <person name="Lowe T."/>
            <person name="McCombie W.R."/>
            <person name="Paulsen I."/>
            <person name="Potashkin J."/>
            <person name="Shpakovski G.V."/>
            <person name="Ussery D."/>
            <person name="Barrell B.G."/>
            <person name="Nurse P."/>
        </authorList>
    </citation>
    <scope>NUCLEOTIDE SEQUENCE [LARGE SCALE GENOMIC DNA]</scope>
    <source>
        <strain>972 / ATCC 24843</strain>
    </source>
</reference>
<reference key="3">
    <citation type="journal article" date="2005" name="Curr. Biol.">
        <title>A large-scale screen in S. pombe identifies seven novel genes required for critical meiotic events.</title>
        <authorList>
            <person name="Martin-Castellanos C."/>
            <person name="Blanco M."/>
            <person name="Rozalen A.E."/>
            <person name="Perez-Hidalgo L."/>
            <person name="Garcia A.I."/>
            <person name="Conde F."/>
            <person name="Mata J."/>
            <person name="Ellermeier C."/>
            <person name="Davis L."/>
            <person name="San-Segundo P."/>
            <person name="Smith G.R."/>
            <person name="Moreno S."/>
        </authorList>
    </citation>
    <scope>FUNCTION IN MEIOSIS</scope>
</reference>
<reference key="4">
    <citation type="journal article" date="2006" name="Nat. Biotechnol.">
        <title>ORFeome cloning and global analysis of protein localization in the fission yeast Schizosaccharomyces pombe.</title>
        <authorList>
            <person name="Matsuyama A."/>
            <person name="Arai R."/>
            <person name="Yashiroda Y."/>
            <person name="Shirai A."/>
            <person name="Kamata A."/>
            <person name="Sekido S."/>
            <person name="Kobayashi Y."/>
            <person name="Hashimoto A."/>
            <person name="Hamamoto M."/>
            <person name="Hiraoka Y."/>
            <person name="Horinouchi S."/>
            <person name="Yoshida M."/>
        </authorList>
    </citation>
    <scope>SUBCELLULAR LOCATION [LARGE SCALE ANALYSIS]</scope>
</reference>
<comment type="function">
    <text evidence="2">Has a role in meiosis.</text>
</comment>
<comment type="subcellular location">
    <subcellularLocation>
        <location evidence="3">Cytoplasm</location>
    </subcellularLocation>
</comment>
<accession>O14323</accession>
<proteinExistence type="evidence at protein level"/>
<feature type="chain" id="PRO_0000096290" description="Meiotic coiled-coil protein 4">
    <location>
        <begin position="1"/>
        <end position="355"/>
    </location>
</feature>
<feature type="coiled-coil region" evidence="1">
    <location>
        <begin position="298"/>
        <end position="338"/>
    </location>
</feature>
<dbReference type="EMBL" id="AB189988">
    <property type="protein sequence ID" value="BAD42850.1"/>
    <property type="molecule type" value="Genomic_DNA"/>
</dbReference>
<dbReference type="EMBL" id="CU329671">
    <property type="protein sequence ID" value="CAB16900.1"/>
    <property type="molecule type" value="Genomic_DNA"/>
</dbReference>
<dbReference type="PIR" id="T39582">
    <property type="entry name" value="T39582"/>
</dbReference>
<dbReference type="RefSeq" id="NP_595790.1">
    <property type="nucleotide sequence ID" value="NM_001021691.1"/>
</dbReference>
<dbReference type="STRING" id="284812.O14323"/>
<dbReference type="iPTMnet" id="O14323"/>
<dbReference type="PaxDb" id="4896-SPBC16E9.08.1"/>
<dbReference type="EnsemblFungi" id="SPBC16E9.08.1">
    <property type="protein sequence ID" value="SPBC16E9.08.1:pep"/>
    <property type="gene ID" value="SPBC16E9.08"/>
</dbReference>
<dbReference type="GeneID" id="2540004"/>
<dbReference type="KEGG" id="spo:2540004"/>
<dbReference type="PomBase" id="SPBC16E9.08">
    <property type="gene designation" value="mcp4"/>
</dbReference>
<dbReference type="VEuPathDB" id="FungiDB:SPBC16E9.08"/>
<dbReference type="HOGENOM" id="CLU_781103_0_0_1"/>
<dbReference type="InParanoid" id="O14323"/>
<dbReference type="PRO" id="PR:O14323"/>
<dbReference type="Proteomes" id="UP000002485">
    <property type="component" value="Chromosome II"/>
</dbReference>
<dbReference type="GO" id="GO:0005737">
    <property type="term" value="C:cytoplasm"/>
    <property type="evidence" value="ECO:0000314"/>
    <property type="project" value="PomBase"/>
</dbReference>
<dbReference type="GO" id="GO:0005628">
    <property type="term" value="C:prospore membrane"/>
    <property type="evidence" value="ECO:0000314"/>
    <property type="project" value="PomBase"/>
</dbReference>
<dbReference type="GO" id="GO:0030036">
    <property type="term" value="P:actin cytoskeleton organization"/>
    <property type="evidence" value="ECO:0000315"/>
    <property type="project" value="PomBase"/>
</dbReference>
<dbReference type="GO" id="GO:0140043">
    <property type="term" value="P:lipid droplet localization to prospore membrane leading edge"/>
    <property type="evidence" value="ECO:0000269"/>
    <property type="project" value="PomBase"/>
</dbReference>
<dbReference type="GO" id="GO:0051321">
    <property type="term" value="P:meiotic cell cycle"/>
    <property type="evidence" value="ECO:0007669"/>
    <property type="project" value="UniProtKB-KW"/>
</dbReference>
<protein>
    <recommendedName>
        <fullName>Meiotic coiled-coil protein 4</fullName>
    </recommendedName>
    <alternativeName>
        <fullName>Meiotically up-regulated gene 101 protein</fullName>
    </alternativeName>
</protein>
<keyword id="KW-0175">Coiled coil</keyword>
<keyword id="KW-0963">Cytoplasm</keyword>
<keyword id="KW-0469">Meiosis</keyword>
<keyword id="KW-1185">Reference proteome</keyword>
<sequence>MEPCEDKCKRGLSLNFFEEDGPSLRLNSDSLDFLARDFKVEGMSQDNFDQKTKLYITEESLQKEVNIFLTKIYIRESEREPPQSHNSVFQLLSKIRNSVPNVSAFRNNLSILSKELSFFSFARHIHNRRLCWAEFIYCIRRGIKAIFKTTVQFLPTRLAKIFEKKASEVLKDNLLQTCNSKREGEVCDVKEPAVASSESSDCFNDMQELNNIVDLRDYSNSRFQQNRLLDRNLKGWIQGESEKALKGRRTTKRNDKENYNYPDFSNDNELLFSLATLIVENNPKKENIIPKYYLRYLQRLSRTEINKEIIEIEKLELEVVQFQMSIANLINTQVEVTNTIEELGLRCRPLPNENE</sequence>
<name>MCP4_SCHPO</name>